<accession>Q2GTM8</accession>
<organism>
    <name type="scientific">Chaetomium globosum (strain ATCC 6205 / CBS 148.51 / DSM 1962 / NBRC 6347 / NRRL 1970)</name>
    <name type="common">Soil fungus</name>
    <dbReference type="NCBI Taxonomy" id="306901"/>
    <lineage>
        <taxon>Eukaryota</taxon>
        <taxon>Fungi</taxon>
        <taxon>Dikarya</taxon>
        <taxon>Ascomycota</taxon>
        <taxon>Pezizomycotina</taxon>
        <taxon>Sordariomycetes</taxon>
        <taxon>Sordariomycetidae</taxon>
        <taxon>Sordariales</taxon>
        <taxon>Chaetomiaceae</taxon>
        <taxon>Chaetomium</taxon>
    </lineage>
</organism>
<feature type="chain" id="PRO_0000365363" description="Eukaryotic translation initiation factor 3 subunit I">
    <location>
        <begin position="1"/>
        <end position="341"/>
    </location>
</feature>
<feature type="repeat" description="WD 1">
    <location>
        <begin position="8"/>
        <end position="49"/>
    </location>
</feature>
<feature type="repeat" description="WD 2">
    <location>
        <begin position="50"/>
        <end position="91"/>
    </location>
</feature>
<feature type="repeat" description="WD 3">
    <location>
        <begin position="135"/>
        <end position="184"/>
    </location>
</feature>
<feature type="repeat" description="WD 4">
    <location>
        <begin position="189"/>
        <end position="228"/>
    </location>
</feature>
<feature type="repeat" description="WD 5">
    <location>
        <begin position="286"/>
        <end position="325"/>
    </location>
</feature>
<evidence type="ECO:0000255" key="1">
    <source>
        <dbReference type="HAMAP-Rule" id="MF_03008"/>
    </source>
</evidence>
<comment type="function">
    <text evidence="1">Component of the eukaryotic translation initiation factor 3 (eIF-3) complex, which is involved in protein synthesis of a specialized repertoire of mRNAs and, together with other initiation factors, stimulates binding of mRNA and methionyl-tRNAi to the 40S ribosome. The eIF-3 complex specifically targets and initiates translation of a subset of mRNAs involved in cell proliferation.</text>
</comment>
<comment type="subunit">
    <text evidence="1">Component of the eukaryotic translation initiation factor 3 (eIF-3) complex.</text>
</comment>
<comment type="subcellular location">
    <subcellularLocation>
        <location evidence="1">Cytoplasm</location>
    </subcellularLocation>
</comment>
<comment type="similarity">
    <text evidence="1">Belongs to the eIF-3 subunit I family.</text>
</comment>
<name>EIF3I_CHAGB</name>
<dbReference type="EMBL" id="CH408034">
    <property type="protein sequence ID" value="EAQ84662.1"/>
    <property type="molecule type" value="Genomic_DNA"/>
</dbReference>
<dbReference type="RefSeq" id="XP_001226603.1">
    <property type="nucleotide sequence ID" value="XM_001226602.1"/>
</dbReference>
<dbReference type="SMR" id="Q2GTM8"/>
<dbReference type="FunCoup" id="Q2GTM8">
    <property type="interactions" value="978"/>
</dbReference>
<dbReference type="STRING" id="306901.Q2GTM8"/>
<dbReference type="GeneID" id="4395197"/>
<dbReference type="VEuPathDB" id="FungiDB:CHGG_08676"/>
<dbReference type="eggNOG" id="KOG0643">
    <property type="taxonomic scope" value="Eukaryota"/>
</dbReference>
<dbReference type="HOGENOM" id="CLU_043845_0_1_1"/>
<dbReference type="InParanoid" id="Q2GTM8"/>
<dbReference type="OMA" id="VWFSHNG"/>
<dbReference type="OrthoDB" id="24966at2759"/>
<dbReference type="Proteomes" id="UP000001056">
    <property type="component" value="Unassembled WGS sequence"/>
</dbReference>
<dbReference type="GO" id="GO:0016282">
    <property type="term" value="C:eukaryotic 43S preinitiation complex"/>
    <property type="evidence" value="ECO:0007669"/>
    <property type="project" value="UniProtKB-UniRule"/>
</dbReference>
<dbReference type="GO" id="GO:0033290">
    <property type="term" value="C:eukaryotic 48S preinitiation complex"/>
    <property type="evidence" value="ECO:0007669"/>
    <property type="project" value="UniProtKB-UniRule"/>
</dbReference>
<dbReference type="GO" id="GO:0071540">
    <property type="term" value="C:eukaryotic translation initiation factor 3 complex, eIF3e"/>
    <property type="evidence" value="ECO:0007669"/>
    <property type="project" value="EnsemblFungi"/>
</dbReference>
<dbReference type="GO" id="GO:0071541">
    <property type="term" value="C:eukaryotic translation initiation factor 3 complex, eIF3m"/>
    <property type="evidence" value="ECO:0007669"/>
    <property type="project" value="EnsemblFungi"/>
</dbReference>
<dbReference type="GO" id="GO:0034399">
    <property type="term" value="C:nuclear periphery"/>
    <property type="evidence" value="ECO:0007669"/>
    <property type="project" value="EnsemblFungi"/>
</dbReference>
<dbReference type="GO" id="GO:0003723">
    <property type="term" value="F:RNA binding"/>
    <property type="evidence" value="ECO:0007669"/>
    <property type="project" value="TreeGrafter"/>
</dbReference>
<dbReference type="GO" id="GO:0003743">
    <property type="term" value="F:translation initiation factor activity"/>
    <property type="evidence" value="ECO:0007669"/>
    <property type="project" value="UniProtKB-UniRule"/>
</dbReference>
<dbReference type="GO" id="GO:0001732">
    <property type="term" value="P:formation of cytoplasmic translation initiation complex"/>
    <property type="evidence" value="ECO:0007669"/>
    <property type="project" value="UniProtKB-UniRule"/>
</dbReference>
<dbReference type="FunFam" id="2.130.10.10:FF:000127">
    <property type="entry name" value="Eukaryotic translation initiation factor 3 subunit I"/>
    <property type="match status" value="1"/>
</dbReference>
<dbReference type="Gene3D" id="2.130.10.10">
    <property type="entry name" value="YVTN repeat-like/Quinoprotein amine dehydrogenase"/>
    <property type="match status" value="1"/>
</dbReference>
<dbReference type="HAMAP" id="MF_03008">
    <property type="entry name" value="eIF3i"/>
    <property type="match status" value="1"/>
</dbReference>
<dbReference type="InterPro" id="IPR027525">
    <property type="entry name" value="eIF3i"/>
</dbReference>
<dbReference type="InterPro" id="IPR015943">
    <property type="entry name" value="WD40/YVTN_repeat-like_dom_sf"/>
</dbReference>
<dbReference type="InterPro" id="IPR019775">
    <property type="entry name" value="WD40_repeat_CS"/>
</dbReference>
<dbReference type="InterPro" id="IPR036322">
    <property type="entry name" value="WD40_repeat_dom_sf"/>
</dbReference>
<dbReference type="InterPro" id="IPR001680">
    <property type="entry name" value="WD40_rpt"/>
</dbReference>
<dbReference type="PANTHER" id="PTHR19877">
    <property type="entry name" value="EUKARYOTIC TRANSLATION INITIATION FACTOR 3 SUBUNIT I"/>
    <property type="match status" value="1"/>
</dbReference>
<dbReference type="PANTHER" id="PTHR19877:SF1">
    <property type="entry name" value="EUKARYOTIC TRANSLATION INITIATION FACTOR 3 SUBUNIT I"/>
    <property type="match status" value="1"/>
</dbReference>
<dbReference type="Pfam" id="PF24805">
    <property type="entry name" value="EIF3I"/>
    <property type="match status" value="1"/>
</dbReference>
<dbReference type="SMART" id="SM00320">
    <property type="entry name" value="WD40"/>
    <property type="match status" value="6"/>
</dbReference>
<dbReference type="SUPFAM" id="SSF50978">
    <property type="entry name" value="WD40 repeat-like"/>
    <property type="match status" value="1"/>
</dbReference>
<dbReference type="PROSITE" id="PS00678">
    <property type="entry name" value="WD_REPEATS_1"/>
    <property type="match status" value="1"/>
</dbReference>
<dbReference type="PROSITE" id="PS50082">
    <property type="entry name" value="WD_REPEATS_2"/>
    <property type="match status" value="2"/>
</dbReference>
<dbReference type="PROSITE" id="PS50294">
    <property type="entry name" value="WD_REPEATS_REGION"/>
    <property type="match status" value="2"/>
</dbReference>
<sequence length="341" mass="37841">MRPILLAGHERALTQIKYNPDGDLIFSVSKDQQICVWFAHNGERLGTYRGHQGAIWTIDVDPTSTILASGSADNTIRLWDIKTGKCLKTWDFPTAVKRVEFNEDGTKLLGVTEKRMGHLGTIVVLDIKIDVEAEQSDEKVMTIVCDESKATVAGWSYLSKYIIAGHEDGSVSQYDGKTGDLLYNIPIHELNQPITDLQWSQDRTYFITASKDKTSKLISSKDLEVLKSYTADTPLNSAAITPKKDFVILGGGQAAMDVTTTAARQGKFEARFYHKIFEDEIGRVRGHFGPLNTVAADPTGKGYASGGEDGYVRVHAFDKGYYDFLYEVERERQNRLAAASA</sequence>
<protein>
    <recommendedName>
        <fullName evidence="1">Eukaryotic translation initiation factor 3 subunit I</fullName>
        <shortName evidence="1">eIF3i</shortName>
    </recommendedName>
    <alternativeName>
        <fullName evidence="1">Eukaryotic translation initiation factor 3 39 kDa subunit homolog</fullName>
        <shortName evidence="1">eIF-3 39 kDa subunit homolog</shortName>
    </alternativeName>
</protein>
<keyword id="KW-0963">Cytoplasm</keyword>
<keyword id="KW-0396">Initiation factor</keyword>
<keyword id="KW-0648">Protein biosynthesis</keyword>
<keyword id="KW-1185">Reference proteome</keyword>
<keyword id="KW-0677">Repeat</keyword>
<keyword id="KW-0853">WD repeat</keyword>
<proteinExistence type="inferred from homology"/>
<gene>
    <name evidence="1" type="primary">TIF34</name>
    <name type="ORF">CHGG_08676</name>
</gene>
<reference key="1">
    <citation type="journal article" date="2015" name="Genome Announc.">
        <title>Draft genome sequence of the cellulolytic fungus Chaetomium globosum.</title>
        <authorList>
            <person name="Cuomo C.A."/>
            <person name="Untereiner W.A."/>
            <person name="Ma L.-J."/>
            <person name="Grabherr M."/>
            <person name="Birren B.W."/>
        </authorList>
    </citation>
    <scope>NUCLEOTIDE SEQUENCE [LARGE SCALE GENOMIC DNA]</scope>
    <source>
        <strain>ATCC 6205 / CBS 148.51 / DSM 1962 / NBRC 6347 / NRRL 1970</strain>
    </source>
</reference>